<keyword id="KW-0008">Acetylcholine receptor inhibiting toxin</keyword>
<keyword id="KW-0027">Amidation</keyword>
<keyword id="KW-0165">Cleavage on pair of basic residues</keyword>
<keyword id="KW-1015">Disulfide bond</keyword>
<keyword id="KW-0872">Ion channel impairing toxin</keyword>
<keyword id="KW-0528">Neurotoxin</keyword>
<keyword id="KW-0629">Postsynaptic neurotoxin</keyword>
<keyword id="KW-0964">Secreted</keyword>
<keyword id="KW-0732">Signal</keyword>
<keyword id="KW-0800">Toxin</keyword>
<proteinExistence type="evidence at protein level"/>
<evidence type="ECO:0000250" key="1"/>
<evidence type="ECO:0000250" key="2">
    <source>
        <dbReference type="UniProtKB" id="P01523"/>
    </source>
</evidence>
<evidence type="ECO:0000255" key="3"/>
<evidence type="ECO:0000269" key="4">
    <source>
    </source>
</evidence>
<evidence type="ECO:0000305" key="5"/>
<evidence type="ECO:0000305" key="6">
    <source>
    </source>
</evidence>
<feature type="signal peptide" evidence="3">
    <location>
        <begin position="1"/>
        <end position="19"/>
    </location>
</feature>
<feature type="propeptide" id="PRO_0000331766" evidence="5">
    <location>
        <begin position="20"/>
        <end position="50"/>
    </location>
</feature>
<feature type="peptide" id="PRO_0000331767" description="Psi-conotoxin PrIIIE">
    <location>
        <begin position="51"/>
        <end position="72"/>
    </location>
</feature>
<feature type="modified residue" description="Cysteine amide" evidence="6">
    <location>
        <position position="72"/>
    </location>
</feature>
<feature type="disulfide bond" evidence="2">
    <location>
        <begin position="54"/>
        <end position="66"/>
    </location>
</feature>
<feature type="disulfide bond" evidence="2">
    <location>
        <begin position="55"/>
        <end position="71"/>
    </location>
</feature>
<feature type="disulfide bond" evidence="2">
    <location>
        <begin position="61"/>
        <end position="72"/>
    </location>
</feature>
<dbReference type="ConoServer" id="2831">
    <property type="toxin name" value="PrIIIE precursor"/>
</dbReference>
<dbReference type="GO" id="GO:0005576">
    <property type="term" value="C:extracellular region"/>
    <property type="evidence" value="ECO:0007669"/>
    <property type="project" value="UniProtKB-SubCell"/>
</dbReference>
<dbReference type="GO" id="GO:0035792">
    <property type="term" value="C:host cell postsynaptic membrane"/>
    <property type="evidence" value="ECO:0007669"/>
    <property type="project" value="UniProtKB-KW"/>
</dbReference>
<dbReference type="GO" id="GO:0030550">
    <property type="term" value="F:acetylcholine receptor inhibitor activity"/>
    <property type="evidence" value="ECO:0007669"/>
    <property type="project" value="UniProtKB-KW"/>
</dbReference>
<dbReference type="GO" id="GO:0008200">
    <property type="term" value="F:ion channel inhibitor activity"/>
    <property type="evidence" value="ECO:0007669"/>
    <property type="project" value="InterPro"/>
</dbReference>
<dbReference type="GO" id="GO:0090729">
    <property type="term" value="F:toxin activity"/>
    <property type="evidence" value="ECO:0007669"/>
    <property type="project" value="UniProtKB-KW"/>
</dbReference>
<dbReference type="InterPro" id="IPR004214">
    <property type="entry name" value="Conotoxin"/>
</dbReference>
<dbReference type="Pfam" id="PF02950">
    <property type="entry name" value="Conotoxin"/>
    <property type="match status" value="1"/>
</dbReference>
<sequence>MSKLGVLLTICLLLFPITALPVDGDQPADRPVERMQDNISSEQHPFFEKRAARCCTYHGSCLKEKCRRKYCCGR</sequence>
<organism>
    <name type="scientific">Conus parius</name>
    <name type="common">Cone snail</name>
    <dbReference type="NCBI Taxonomy" id="505247"/>
    <lineage>
        <taxon>Eukaryota</taxon>
        <taxon>Metazoa</taxon>
        <taxon>Spiralia</taxon>
        <taxon>Lophotrochozoa</taxon>
        <taxon>Mollusca</taxon>
        <taxon>Gastropoda</taxon>
        <taxon>Caenogastropoda</taxon>
        <taxon>Neogastropoda</taxon>
        <taxon>Conoidea</taxon>
        <taxon>Conidae</taxon>
        <taxon>Conus</taxon>
        <taxon>Phasmoconus</taxon>
    </lineage>
</organism>
<comment type="function">
    <text evidence="4">Psi-conotoxins act on postsynaptic membranes, and act as non-competitive antagonist of nicotinic acetylcholine receptors (nAChR). Reversibly inhibits both adult- and fetal-types nAChR. The inhibition potency against the adult- (alpha-1/beta-1/epsilon/delta) is higher than against the fetal-type (alpha-1/beta-1/gamma/delta). Induces flaccid paralysis in goldfish, but does not induce any remarkable behavior in mice and does not block action potential in directly stimulated frog muscle preparations.</text>
</comment>
<comment type="subcellular location">
    <subcellularLocation>
        <location evidence="1">Secreted</location>
    </subcellularLocation>
</comment>
<comment type="tissue specificity">
    <text>Expressed by the venom duct.</text>
</comment>
<comment type="domain">
    <text>The cysteine framework is III (CC-C-C-CC). Classified in the M-4 branch, since 4 residues stand between the fourth and the fifth cysteine residues.</text>
</comment>
<comment type="miscellaneous">
    <text evidence="6">Negative results: does not show inhibitory effects against the mouse muscle subtype sodium channel Nav1.4/SCN4A.</text>
</comment>
<comment type="similarity">
    <text evidence="5">Belongs to the conotoxin M superfamily.</text>
</comment>
<protein>
    <recommendedName>
        <fullName>Psi-conotoxin PrIIIE</fullName>
    </recommendedName>
    <alternativeName>
        <fullName>Psi-conotoxin Pr3.5</fullName>
    </alternativeName>
    <alternativeName>
        <fullName>Psi-conotoxin pr3e</fullName>
    </alternativeName>
</protein>
<name>CM3E_CONPI</name>
<accession>P0C7I1</accession>
<reference key="1">
    <citation type="journal article" date="2008" name="Toxicon">
        <title>Characterization of a novel psi-conotoxin from Conus parius Reeve.</title>
        <authorList>
            <person name="Lluisma A.O."/>
            <person name="Lopez-Vera E."/>
            <person name="Bulaj G."/>
            <person name="Watkins M."/>
            <person name="Olivera B.M."/>
        </authorList>
    </citation>
    <scope>NUCLEOTIDE SEQUENCE [MRNA]</scope>
    <scope>SYNTHESIS OF 51-72</scope>
    <scope>AMIDATION AT CYS-72</scope>
    <scope>FUNCTION</scope>
    <source>
        <tissue>Venom duct</tissue>
    </source>
</reference>